<reference key="1">
    <citation type="journal article" date="2009" name="PLoS Genet.">
        <title>Organised genome dynamics in the Escherichia coli species results in highly diverse adaptive paths.</title>
        <authorList>
            <person name="Touchon M."/>
            <person name="Hoede C."/>
            <person name="Tenaillon O."/>
            <person name="Barbe V."/>
            <person name="Baeriswyl S."/>
            <person name="Bidet P."/>
            <person name="Bingen E."/>
            <person name="Bonacorsi S."/>
            <person name="Bouchier C."/>
            <person name="Bouvet O."/>
            <person name="Calteau A."/>
            <person name="Chiapello H."/>
            <person name="Clermont O."/>
            <person name="Cruveiller S."/>
            <person name="Danchin A."/>
            <person name="Diard M."/>
            <person name="Dossat C."/>
            <person name="Karoui M.E."/>
            <person name="Frapy E."/>
            <person name="Garry L."/>
            <person name="Ghigo J.M."/>
            <person name="Gilles A.M."/>
            <person name="Johnson J."/>
            <person name="Le Bouguenec C."/>
            <person name="Lescat M."/>
            <person name="Mangenot S."/>
            <person name="Martinez-Jehanne V."/>
            <person name="Matic I."/>
            <person name="Nassif X."/>
            <person name="Oztas S."/>
            <person name="Petit M.A."/>
            <person name="Pichon C."/>
            <person name="Rouy Z."/>
            <person name="Ruf C.S."/>
            <person name="Schneider D."/>
            <person name="Tourret J."/>
            <person name="Vacherie B."/>
            <person name="Vallenet D."/>
            <person name="Medigue C."/>
            <person name="Rocha E.P.C."/>
            <person name="Denamur E."/>
        </authorList>
    </citation>
    <scope>NUCLEOTIDE SEQUENCE [LARGE SCALE GENOMIC DNA]</scope>
    <source>
        <strain>UMN026 / ExPEC</strain>
    </source>
</reference>
<evidence type="ECO:0000255" key="1">
    <source>
        <dbReference type="HAMAP-Rule" id="MF_01347"/>
    </source>
</evidence>
<keyword id="KW-0066">ATP synthesis</keyword>
<keyword id="KW-0067">ATP-binding</keyword>
<keyword id="KW-0997">Cell inner membrane</keyword>
<keyword id="KW-1003">Cell membrane</keyword>
<keyword id="KW-0139">CF(1)</keyword>
<keyword id="KW-0375">Hydrogen ion transport</keyword>
<keyword id="KW-0406">Ion transport</keyword>
<keyword id="KW-0472">Membrane</keyword>
<keyword id="KW-0547">Nucleotide-binding</keyword>
<keyword id="KW-1278">Translocase</keyword>
<keyword id="KW-0813">Transport</keyword>
<gene>
    <name evidence="1" type="primary">atpD</name>
    <name type="ordered locus">ECUMN_4262</name>
</gene>
<sequence>MATGKIVQVIGAVVDVEFPQDAVPRVYDALEVQNGNERLVLEVQQQLGGGIVRTIAMGSSDGLRRGLDVKDLEHPIEVPVGKATLGRIMNVLGEPVDMKGEIGEEERWAIHRAAPSYEELSNSQELLETGIKVIDLMCPFAKGGKVGLFGGAGVGKTVNMMELIRNIAIEHSGYSVFAGVGERTREGNDFYHEMTDSNVIDKVSLVYGQMNEPPGNRLRVALTGLTMAEKFRDEGRDVLLFVDNIYRYTLAGTEVSALLGRMPSAVGYQPTLAEEMGVLQERITSTKTGSITSVQAVYVPADDLTDPSPATTFAHLDATVVLSRQIASLGIYPAVDPLDSTSRQLDPLVVGQEHYDTARGVQSILQRYQELKDIIAILGMDELSEEDKLVVARARKIQRFLSQPFFVAEVFTGSPGKYVSLKDTIRGFKGIMEGEYDHLPEQAFYMVGSIEEAVEKAKKL</sequence>
<dbReference type="EC" id="7.1.2.2" evidence="1"/>
<dbReference type="EMBL" id="CU928163">
    <property type="protein sequence ID" value="CAR15402.1"/>
    <property type="molecule type" value="Genomic_DNA"/>
</dbReference>
<dbReference type="RefSeq" id="WP_000190506.1">
    <property type="nucleotide sequence ID" value="NC_011751.1"/>
</dbReference>
<dbReference type="RefSeq" id="YP_002414897.1">
    <property type="nucleotide sequence ID" value="NC_011751.1"/>
</dbReference>
<dbReference type="SMR" id="B7NF48"/>
<dbReference type="STRING" id="585056.ECUMN_4262"/>
<dbReference type="GeneID" id="93778235"/>
<dbReference type="KEGG" id="eum:ECUMN_4262"/>
<dbReference type="PATRIC" id="fig|585056.7.peg.4433"/>
<dbReference type="HOGENOM" id="CLU_022398_0_2_6"/>
<dbReference type="Proteomes" id="UP000007097">
    <property type="component" value="Chromosome"/>
</dbReference>
<dbReference type="GO" id="GO:0005886">
    <property type="term" value="C:plasma membrane"/>
    <property type="evidence" value="ECO:0007669"/>
    <property type="project" value="UniProtKB-SubCell"/>
</dbReference>
<dbReference type="GO" id="GO:0045259">
    <property type="term" value="C:proton-transporting ATP synthase complex"/>
    <property type="evidence" value="ECO:0007669"/>
    <property type="project" value="UniProtKB-KW"/>
</dbReference>
<dbReference type="GO" id="GO:0005524">
    <property type="term" value="F:ATP binding"/>
    <property type="evidence" value="ECO:0007669"/>
    <property type="project" value="UniProtKB-UniRule"/>
</dbReference>
<dbReference type="GO" id="GO:0016887">
    <property type="term" value="F:ATP hydrolysis activity"/>
    <property type="evidence" value="ECO:0007669"/>
    <property type="project" value="InterPro"/>
</dbReference>
<dbReference type="GO" id="GO:0046933">
    <property type="term" value="F:proton-transporting ATP synthase activity, rotational mechanism"/>
    <property type="evidence" value="ECO:0007669"/>
    <property type="project" value="UniProtKB-UniRule"/>
</dbReference>
<dbReference type="CDD" id="cd18110">
    <property type="entry name" value="ATP-synt_F1_beta_C"/>
    <property type="match status" value="1"/>
</dbReference>
<dbReference type="CDD" id="cd18115">
    <property type="entry name" value="ATP-synt_F1_beta_N"/>
    <property type="match status" value="1"/>
</dbReference>
<dbReference type="CDD" id="cd01133">
    <property type="entry name" value="F1-ATPase_beta_CD"/>
    <property type="match status" value="1"/>
</dbReference>
<dbReference type="FunFam" id="1.10.1140.10:FF:000001">
    <property type="entry name" value="ATP synthase subunit beta"/>
    <property type="match status" value="1"/>
</dbReference>
<dbReference type="FunFam" id="2.40.10.170:FF:000003">
    <property type="entry name" value="ATP synthase subunit beta"/>
    <property type="match status" value="1"/>
</dbReference>
<dbReference type="FunFam" id="3.40.50.300:FF:000004">
    <property type="entry name" value="ATP synthase subunit beta"/>
    <property type="match status" value="1"/>
</dbReference>
<dbReference type="Gene3D" id="2.40.10.170">
    <property type="match status" value="1"/>
</dbReference>
<dbReference type="Gene3D" id="1.10.1140.10">
    <property type="entry name" value="Bovine Mitochondrial F1-atpase, Atp Synthase Beta Chain, Chain D, domain 3"/>
    <property type="match status" value="1"/>
</dbReference>
<dbReference type="Gene3D" id="3.40.50.300">
    <property type="entry name" value="P-loop containing nucleotide triphosphate hydrolases"/>
    <property type="match status" value="1"/>
</dbReference>
<dbReference type="HAMAP" id="MF_01347">
    <property type="entry name" value="ATP_synth_beta_bact"/>
    <property type="match status" value="1"/>
</dbReference>
<dbReference type="InterPro" id="IPR003593">
    <property type="entry name" value="AAA+_ATPase"/>
</dbReference>
<dbReference type="InterPro" id="IPR055190">
    <property type="entry name" value="ATP-synt_VA_C"/>
</dbReference>
<dbReference type="InterPro" id="IPR005722">
    <property type="entry name" value="ATP_synth_F1_bsu"/>
</dbReference>
<dbReference type="InterPro" id="IPR020003">
    <property type="entry name" value="ATPase_a/bsu_AS"/>
</dbReference>
<dbReference type="InterPro" id="IPR050053">
    <property type="entry name" value="ATPase_alpha/beta_chains"/>
</dbReference>
<dbReference type="InterPro" id="IPR004100">
    <property type="entry name" value="ATPase_F1/V1/A1_a/bsu_N"/>
</dbReference>
<dbReference type="InterPro" id="IPR036121">
    <property type="entry name" value="ATPase_F1/V1/A1_a/bsu_N_sf"/>
</dbReference>
<dbReference type="InterPro" id="IPR000194">
    <property type="entry name" value="ATPase_F1/V1/A1_a/bsu_nucl-bd"/>
</dbReference>
<dbReference type="InterPro" id="IPR024034">
    <property type="entry name" value="ATPase_F1/V1_b/a_C"/>
</dbReference>
<dbReference type="InterPro" id="IPR027417">
    <property type="entry name" value="P-loop_NTPase"/>
</dbReference>
<dbReference type="NCBIfam" id="TIGR01039">
    <property type="entry name" value="atpD"/>
    <property type="match status" value="1"/>
</dbReference>
<dbReference type="PANTHER" id="PTHR15184">
    <property type="entry name" value="ATP SYNTHASE"/>
    <property type="match status" value="1"/>
</dbReference>
<dbReference type="PANTHER" id="PTHR15184:SF71">
    <property type="entry name" value="ATP SYNTHASE SUBUNIT BETA, MITOCHONDRIAL"/>
    <property type="match status" value="1"/>
</dbReference>
<dbReference type="Pfam" id="PF00006">
    <property type="entry name" value="ATP-synt_ab"/>
    <property type="match status" value="1"/>
</dbReference>
<dbReference type="Pfam" id="PF02874">
    <property type="entry name" value="ATP-synt_ab_N"/>
    <property type="match status" value="1"/>
</dbReference>
<dbReference type="Pfam" id="PF22919">
    <property type="entry name" value="ATP-synt_VA_C"/>
    <property type="match status" value="1"/>
</dbReference>
<dbReference type="SMART" id="SM00382">
    <property type="entry name" value="AAA"/>
    <property type="match status" value="1"/>
</dbReference>
<dbReference type="SUPFAM" id="SSF47917">
    <property type="entry name" value="C-terminal domain of alpha and beta subunits of F1 ATP synthase"/>
    <property type="match status" value="1"/>
</dbReference>
<dbReference type="SUPFAM" id="SSF50615">
    <property type="entry name" value="N-terminal domain of alpha and beta subunits of F1 ATP synthase"/>
    <property type="match status" value="1"/>
</dbReference>
<dbReference type="SUPFAM" id="SSF52540">
    <property type="entry name" value="P-loop containing nucleoside triphosphate hydrolases"/>
    <property type="match status" value="1"/>
</dbReference>
<dbReference type="PROSITE" id="PS00152">
    <property type="entry name" value="ATPASE_ALPHA_BETA"/>
    <property type="match status" value="1"/>
</dbReference>
<proteinExistence type="inferred from homology"/>
<feature type="chain" id="PRO_1000143504" description="ATP synthase subunit beta">
    <location>
        <begin position="1"/>
        <end position="460"/>
    </location>
</feature>
<feature type="binding site" evidence="1">
    <location>
        <begin position="150"/>
        <end position="157"/>
    </location>
    <ligand>
        <name>ATP</name>
        <dbReference type="ChEBI" id="CHEBI:30616"/>
    </ligand>
</feature>
<name>ATPB_ECOLU</name>
<comment type="function">
    <text evidence="1">Produces ATP from ADP in the presence of a proton gradient across the membrane. The catalytic sites are hosted primarily by the beta subunits.</text>
</comment>
<comment type="catalytic activity">
    <reaction evidence="1">
        <text>ATP + H2O + 4 H(+)(in) = ADP + phosphate + 5 H(+)(out)</text>
        <dbReference type="Rhea" id="RHEA:57720"/>
        <dbReference type="ChEBI" id="CHEBI:15377"/>
        <dbReference type="ChEBI" id="CHEBI:15378"/>
        <dbReference type="ChEBI" id="CHEBI:30616"/>
        <dbReference type="ChEBI" id="CHEBI:43474"/>
        <dbReference type="ChEBI" id="CHEBI:456216"/>
        <dbReference type="EC" id="7.1.2.2"/>
    </reaction>
</comment>
<comment type="subunit">
    <text evidence="1">F-type ATPases have 2 components, CF(1) - the catalytic core - and CF(0) - the membrane proton channel. CF(1) has five subunits: alpha(3), beta(3), gamma(1), delta(1), epsilon(1). CF(0) has three main subunits: a(1), b(2) and c(9-12). The alpha and beta chains form an alternating ring which encloses part of the gamma chain. CF(1) is attached to CF(0) by a central stalk formed by the gamma and epsilon chains, while a peripheral stalk is formed by the delta and b chains.</text>
</comment>
<comment type="subcellular location">
    <subcellularLocation>
        <location evidence="1">Cell inner membrane</location>
        <topology evidence="1">Peripheral membrane protein</topology>
    </subcellularLocation>
</comment>
<comment type="similarity">
    <text evidence="1">Belongs to the ATPase alpha/beta chains family.</text>
</comment>
<protein>
    <recommendedName>
        <fullName evidence="1">ATP synthase subunit beta</fullName>
        <ecNumber evidence="1">7.1.2.2</ecNumber>
    </recommendedName>
    <alternativeName>
        <fullName evidence="1">ATP synthase F1 sector subunit beta</fullName>
    </alternativeName>
    <alternativeName>
        <fullName evidence="1">F-ATPase subunit beta</fullName>
    </alternativeName>
</protein>
<organism>
    <name type="scientific">Escherichia coli O17:K52:H18 (strain UMN026 / ExPEC)</name>
    <dbReference type="NCBI Taxonomy" id="585056"/>
    <lineage>
        <taxon>Bacteria</taxon>
        <taxon>Pseudomonadati</taxon>
        <taxon>Pseudomonadota</taxon>
        <taxon>Gammaproteobacteria</taxon>
        <taxon>Enterobacterales</taxon>
        <taxon>Enterobacteriaceae</taxon>
        <taxon>Escherichia</taxon>
    </lineage>
</organism>
<accession>B7NF48</accession>